<protein>
    <recommendedName>
        <fullName evidence="1">4-hydroxy-3-methylbut-2-en-1-yl diphosphate synthase (flavodoxin)</fullName>
        <ecNumber evidence="1">1.17.7.3</ecNumber>
    </recommendedName>
    <alternativeName>
        <fullName evidence="1">1-hydroxy-2-methyl-2-(E)-butenyl 4-diphosphate synthase</fullName>
    </alternativeName>
</protein>
<reference key="1">
    <citation type="submission" date="2009-03" db="EMBL/GenBank/DDBJ databases">
        <title>Brucella melitensis ATCC 23457 whole genome shotgun sequencing project.</title>
        <authorList>
            <person name="Setubal J.C."/>
            <person name="Boyle S."/>
            <person name="Crasta O.R."/>
            <person name="Gillespie J.J."/>
            <person name="Kenyon R.W."/>
            <person name="Lu J."/>
            <person name="Mane S."/>
            <person name="Nagrani S."/>
            <person name="Shallom J.M."/>
            <person name="Shallom S."/>
            <person name="Shukla M."/>
            <person name="Snyder E.E."/>
            <person name="Sobral B.W."/>
            <person name="Wattam A.R."/>
            <person name="Will R."/>
            <person name="Williams K."/>
            <person name="Yoo H."/>
            <person name="Munk C."/>
            <person name="Tapia R."/>
            <person name="Han C."/>
            <person name="Detter J.C."/>
            <person name="Bruce D."/>
            <person name="Brettin T.S."/>
        </authorList>
    </citation>
    <scope>NUCLEOTIDE SEQUENCE [LARGE SCALE GENOMIC DNA]</scope>
    <source>
        <strain>ATCC 23457</strain>
    </source>
</reference>
<organism>
    <name type="scientific">Brucella melitensis biotype 2 (strain ATCC 23457)</name>
    <dbReference type="NCBI Taxonomy" id="546272"/>
    <lineage>
        <taxon>Bacteria</taxon>
        <taxon>Pseudomonadati</taxon>
        <taxon>Pseudomonadota</taxon>
        <taxon>Alphaproteobacteria</taxon>
        <taxon>Hyphomicrobiales</taxon>
        <taxon>Brucellaceae</taxon>
        <taxon>Brucella/Ochrobactrum group</taxon>
        <taxon>Brucella</taxon>
    </lineage>
</organism>
<sequence length="420" mass="45060">MSSETVSYFSHPFPRRQSVGVSVGGVIVGGSAPVVVQSMTNTDTADVDSTVAQVAALHRAGSEIVRITVDRDESAAAVPKIRERLERLGHDVPLVGDFHYIGHKLLADHPACAEALAKYRINPGNVGFKDKKDKQFADIVEMAIRYDKPVRIGVNWGSLDQELLTTLMDRNQAEGAPLSAQDVMREAIVQSALISANLAEEIGLGRDKIILSAKVSQVQDLIAVYTMLAQRSNHALHLGLTEAGMGTKGIVASSAAMGILLQQGIGDTIRISLTPEPGGDRTREVQVAQELLQTMGFRQFVPIVAACPGCGRTTSTVFQELAQTIQEDIRRNMPLWREKYPGVEALSVAVMGCIVNGPGESKHADIGISLPGTGETPSAPVFVDGKKVTTLRGPGIAEDFQKMVADYIENRFGLGRKIAS</sequence>
<evidence type="ECO:0000255" key="1">
    <source>
        <dbReference type="HAMAP-Rule" id="MF_00159"/>
    </source>
</evidence>
<gene>
    <name evidence="1" type="primary">ispG</name>
    <name type="ordered locus">BMEA_A1828</name>
</gene>
<feature type="chain" id="PRO_1000123438" description="4-hydroxy-3-methylbut-2-en-1-yl diphosphate synthase (flavodoxin)">
    <location>
        <begin position="1"/>
        <end position="420"/>
    </location>
</feature>
<feature type="binding site" evidence="1">
    <location>
        <position position="307"/>
    </location>
    <ligand>
        <name>[4Fe-4S] cluster</name>
        <dbReference type="ChEBI" id="CHEBI:49883"/>
    </ligand>
</feature>
<feature type="binding site" evidence="1">
    <location>
        <position position="310"/>
    </location>
    <ligand>
        <name>[4Fe-4S] cluster</name>
        <dbReference type="ChEBI" id="CHEBI:49883"/>
    </ligand>
</feature>
<feature type="binding site" evidence="1">
    <location>
        <position position="353"/>
    </location>
    <ligand>
        <name>[4Fe-4S] cluster</name>
        <dbReference type="ChEBI" id="CHEBI:49883"/>
    </ligand>
</feature>
<feature type="binding site" evidence="1">
    <location>
        <position position="360"/>
    </location>
    <ligand>
        <name>[4Fe-4S] cluster</name>
        <dbReference type="ChEBI" id="CHEBI:49883"/>
    </ligand>
</feature>
<keyword id="KW-0004">4Fe-4S</keyword>
<keyword id="KW-0408">Iron</keyword>
<keyword id="KW-0411">Iron-sulfur</keyword>
<keyword id="KW-0414">Isoprene biosynthesis</keyword>
<keyword id="KW-0479">Metal-binding</keyword>
<keyword id="KW-0560">Oxidoreductase</keyword>
<comment type="function">
    <text evidence="1">Converts 2C-methyl-D-erythritol 2,4-cyclodiphosphate (ME-2,4cPP) into 1-hydroxy-2-methyl-2-(E)-butenyl 4-diphosphate.</text>
</comment>
<comment type="catalytic activity">
    <reaction evidence="1">
        <text>(2E)-4-hydroxy-3-methylbut-2-enyl diphosphate + oxidized [flavodoxin] + H2O + 2 H(+) = 2-C-methyl-D-erythritol 2,4-cyclic diphosphate + reduced [flavodoxin]</text>
        <dbReference type="Rhea" id="RHEA:43604"/>
        <dbReference type="Rhea" id="RHEA-COMP:10622"/>
        <dbReference type="Rhea" id="RHEA-COMP:10623"/>
        <dbReference type="ChEBI" id="CHEBI:15377"/>
        <dbReference type="ChEBI" id="CHEBI:15378"/>
        <dbReference type="ChEBI" id="CHEBI:57618"/>
        <dbReference type="ChEBI" id="CHEBI:58210"/>
        <dbReference type="ChEBI" id="CHEBI:58483"/>
        <dbReference type="ChEBI" id="CHEBI:128753"/>
        <dbReference type="EC" id="1.17.7.3"/>
    </reaction>
</comment>
<comment type="cofactor">
    <cofactor evidence="1">
        <name>[4Fe-4S] cluster</name>
        <dbReference type="ChEBI" id="CHEBI:49883"/>
    </cofactor>
    <text evidence="1">Binds 1 [4Fe-4S] cluster.</text>
</comment>
<comment type="pathway">
    <text evidence="1">Isoprenoid biosynthesis; isopentenyl diphosphate biosynthesis via DXP pathway; isopentenyl diphosphate from 1-deoxy-D-xylulose 5-phosphate: step 5/6.</text>
</comment>
<comment type="similarity">
    <text evidence="1">Belongs to the IspG family.</text>
</comment>
<name>ISPG_BRUMB</name>
<dbReference type="EC" id="1.17.7.3" evidence="1"/>
<dbReference type="EMBL" id="CP001488">
    <property type="protein sequence ID" value="ACO01504.1"/>
    <property type="molecule type" value="Genomic_DNA"/>
</dbReference>
<dbReference type="RefSeq" id="WP_004684229.1">
    <property type="nucleotide sequence ID" value="NC_012441.1"/>
</dbReference>
<dbReference type="SMR" id="C0RF32"/>
<dbReference type="GeneID" id="45125066"/>
<dbReference type="KEGG" id="bmi:BMEA_A1828"/>
<dbReference type="HOGENOM" id="CLU_042258_1_0_5"/>
<dbReference type="UniPathway" id="UPA00056">
    <property type="reaction ID" value="UER00096"/>
</dbReference>
<dbReference type="Proteomes" id="UP000001748">
    <property type="component" value="Chromosome I"/>
</dbReference>
<dbReference type="GO" id="GO:0051539">
    <property type="term" value="F:4 iron, 4 sulfur cluster binding"/>
    <property type="evidence" value="ECO:0007669"/>
    <property type="project" value="UniProtKB-UniRule"/>
</dbReference>
<dbReference type="GO" id="GO:0046429">
    <property type="term" value="F:4-hydroxy-3-methylbut-2-en-1-yl diphosphate synthase activity (ferredoxin)"/>
    <property type="evidence" value="ECO:0007669"/>
    <property type="project" value="UniProtKB-UniRule"/>
</dbReference>
<dbReference type="GO" id="GO:0141197">
    <property type="term" value="F:4-hydroxy-3-methylbut-2-enyl-diphosphate synthase activity (flavodoxin)"/>
    <property type="evidence" value="ECO:0007669"/>
    <property type="project" value="UniProtKB-EC"/>
</dbReference>
<dbReference type="GO" id="GO:0005506">
    <property type="term" value="F:iron ion binding"/>
    <property type="evidence" value="ECO:0007669"/>
    <property type="project" value="InterPro"/>
</dbReference>
<dbReference type="GO" id="GO:0019288">
    <property type="term" value="P:isopentenyl diphosphate biosynthetic process, methylerythritol 4-phosphate pathway"/>
    <property type="evidence" value="ECO:0007669"/>
    <property type="project" value="UniProtKB-UniRule"/>
</dbReference>
<dbReference type="GO" id="GO:0016114">
    <property type="term" value="P:terpenoid biosynthetic process"/>
    <property type="evidence" value="ECO:0007669"/>
    <property type="project" value="InterPro"/>
</dbReference>
<dbReference type="FunFam" id="3.30.413.10:FF:000012">
    <property type="entry name" value="4-hydroxy-3-methylbut-2-en-1-yl diphosphate synthase (flavodoxin)"/>
    <property type="match status" value="1"/>
</dbReference>
<dbReference type="Gene3D" id="3.20.20.20">
    <property type="entry name" value="Dihydropteroate synthase-like"/>
    <property type="match status" value="1"/>
</dbReference>
<dbReference type="Gene3D" id="3.30.413.10">
    <property type="entry name" value="Sulfite Reductase Hemoprotein, domain 1"/>
    <property type="match status" value="1"/>
</dbReference>
<dbReference type="HAMAP" id="MF_00159">
    <property type="entry name" value="IspG"/>
    <property type="match status" value="1"/>
</dbReference>
<dbReference type="InterPro" id="IPR011005">
    <property type="entry name" value="Dihydropteroate_synth-like_sf"/>
</dbReference>
<dbReference type="InterPro" id="IPR016425">
    <property type="entry name" value="IspG_bac"/>
</dbReference>
<dbReference type="InterPro" id="IPR004588">
    <property type="entry name" value="IspG_bac-typ"/>
</dbReference>
<dbReference type="InterPro" id="IPR045854">
    <property type="entry name" value="NO2/SO3_Rdtase_4Fe4S_sf"/>
</dbReference>
<dbReference type="NCBIfam" id="TIGR00612">
    <property type="entry name" value="ispG_gcpE"/>
    <property type="match status" value="1"/>
</dbReference>
<dbReference type="NCBIfam" id="NF001540">
    <property type="entry name" value="PRK00366.1"/>
    <property type="match status" value="1"/>
</dbReference>
<dbReference type="PANTHER" id="PTHR30454">
    <property type="entry name" value="4-HYDROXY-3-METHYLBUT-2-EN-1-YL DIPHOSPHATE SYNTHASE"/>
    <property type="match status" value="1"/>
</dbReference>
<dbReference type="PANTHER" id="PTHR30454:SF0">
    <property type="entry name" value="4-HYDROXY-3-METHYLBUT-2-EN-1-YL DIPHOSPHATE SYNTHASE (FERREDOXIN), CHLOROPLASTIC"/>
    <property type="match status" value="1"/>
</dbReference>
<dbReference type="Pfam" id="PF04551">
    <property type="entry name" value="GcpE"/>
    <property type="match status" value="1"/>
</dbReference>
<dbReference type="PIRSF" id="PIRSF004640">
    <property type="entry name" value="IspG"/>
    <property type="match status" value="1"/>
</dbReference>
<dbReference type="SUPFAM" id="SSF56014">
    <property type="entry name" value="Nitrite and sulphite reductase 4Fe-4S domain-like"/>
    <property type="match status" value="1"/>
</dbReference>
<accession>C0RF32</accession>
<proteinExistence type="inferred from homology"/>